<sequence length="562" mass="64583">MNVFGKKEEKQEKVYSLQNGFPYSHHPYASQYSRPDGPILLQDFHLLENIASFDRERVPERVVHAKGGGCRLEFELTDSLSDITYAAPYQNVGYKCPGLVRFSTVGGESGTPDTARDPRGVSFKFYTEWGNHDWVFNNTPVFFLRDAIKFPVFIHSQKRDPQSHLNQFQDTTIYWDYLTLNPESIHQITYMFGDRGTPASWASMNAYSGHSFIMVNKEGKDTYVQFHVLSDTGFETLTGDKAAELSGSHPDYNQAKLFTQLQNGEKPKFNCYVQTMTPEQATKFRYSVNDLTKIWPHKEFPLRKFGTITLTENVDNYFQEIEQVAFSPTNTCIPGIKPSNDSVLQARLFSYPDTQRHRLGANYQQLPVNRPRNLGCPYSKGDSQYTAEQCPFKAVNFQRDGPMSYYNFGPEPNYISSLPNQTLKFKNEDNDEVSDKFKGIVLDEVTEVSVRKQEQDQIRNEHIVDAKINQYYYVYGISPLDFEQPRALYEKVYNDEQKKLFVHNVVCHACKIKDPKVKKRVTQYFGLLNEDLGKVIAECLGVPWEPVDLEGYAKTWSIASAN</sequence>
<evidence type="ECO:0000250" key="1"/>
<evidence type="ECO:0000255" key="2">
    <source>
        <dbReference type="PROSITE-ProRule" id="PRU10013"/>
    </source>
</evidence>
<evidence type="ECO:0000269" key="3">
    <source>
    </source>
</evidence>
<evidence type="ECO:0000269" key="4">
    <source>
    </source>
</evidence>
<evidence type="ECO:0000305" key="5"/>
<organism>
    <name type="scientific">Saccharomyces cerevisiae (strain ATCC 204508 / S288c)</name>
    <name type="common">Baker's yeast</name>
    <dbReference type="NCBI Taxonomy" id="559292"/>
    <lineage>
        <taxon>Eukaryota</taxon>
        <taxon>Fungi</taxon>
        <taxon>Dikarya</taxon>
        <taxon>Ascomycota</taxon>
        <taxon>Saccharomycotina</taxon>
        <taxon>Saccharomycetes</taxon>
        <taxon>Saccharomycetales</taxon>
        <taxon>Saccharomycetaceae</taxon>
        <taxon>Saccharomyces</taxon>
    </lineage>
</organism>
<accession>P06115</accession>
<accession>D6VUM0</accession>
<keyword id="KW-0963">Cytoplasm</keyword>
<keyword id="KW-0903">Direct protein sequencing</keyword>
<keyword id="KW-0349">Heme</keyword>
<keyword id="KW-0376">Hydrogen peroxide</keyword>
<keyword id="KW-0408">Iron</keyword>
<keyword id="KW-0479">Metal-binding</keyword>
<keyword id="KW-0560">Oxidoreductase</keyword>
<keyword id="KW-0575">Peroxidase</keyword>
<keyword id="KW-1185">Reference proteome</keyword>
<protein>
    <recommendedName>
        <fullName>Catalase T</fullName>
        <ecNumber>1.11.1.6</ecNumber>
    </recommendedName>
</protein>
<feature type="chain" id="PRO_0000084929" description="Catalase T">
    <location>
        <begin position="1"/>
        <end position="562"/>
    </location>
</feature>
<feature type="active site" evidence="2">
    <location>
        <position position="64"/>
    </location>
</feature>
<feature type="active site" evidence="2">
    <location>
        <position position="137"/>
    </location>
</feature>
<feature type="binding site" description="axial binding residue" evidence="1">
    <location>
        <position position="351"/>
    </location>
    <ligand>
        <name>heme</name>
        <dbReference type="ChEBI" id="CHEBI:30413"/>
    </ligand>
    <ligandPart>
        <name>Fe</name>
        <dbReference type="ChEBI" id="CHEBI:18248"/>
    </ligandPart>
</feature>
<feature type="sequence conflict" description="In Ref. 1; CAA28298." evidence="5" ref="1">
    <original>D</original>
    <variation>V</variation>
    <location>
        <position position="429"/>
    </location>
</feature>
<feature type="sequence conflict" description="In Ref. 1; CAA28298." evidence="5" ref="1">
    <original>C</original>
    <variation>G</variation>
    <location>
        <position position="539"/>
    </location>
</feature>
<comment type="function">
    <text>Occurs in almost all aerobically respiring organisms and serves to protect cells from the toxic effects of hydrogen peroxide.</text>
</comment>
<comment type="catalytic activity">
    <reaction evidence="2">
        <text>2 H2O2 = O2 + 2 H2O</text>
        <dbReference type="Rhea" id="RHEA:20309"/>
        <dbReference type="ChEBI" id="CHEBI:15377"/>
        <dbReference type="ChEBI" id="CHEBI:15379"/>
        <dbReference type="ChEBI" id="CHEBI:16240"/>
        <dbReference type="EC" id="1.11.1.6"/>
    </reaction>
</comment>
<comment type="cofactor">
    <cofactor>
        <name>heme</name>
        <dbReference type="ChEBI" id="CHEBI:30413"/>
    </cofactor>
</comment>
<comment type="subunit">
    <text>Homotetramer.</text>
</comment>
<comment type="subcellular location">
    <subcellularLocation>
        <location evidence="3">Cytoplasm</location>
    </subcellularLocation>
</comment>
<comment type="miscellaneous">
    <text>This is one of two catalases in S.cerevisiae; the other is catalase A, which is the peroxisomal form.</text>
</comment>
<comment type="miscellaneous">
    <text evidence="4">Present with 319 molecules/cell in log phase SD medium.</text>
</comment>
<comment type="similarity">
    <text evidence="5">Belongs to the catalase family.</text>
</comment>
<comment type="sequence caution" evidence="5">
    <conflict type="erroneous initiation">
        <sequence resource="EMBL-CDS" id="AAA34540"/>
    </conflict>
</comment>
<comment type="sequence caution" evidence="5">
    <conflict type="erroneous initiation">
        <sequence resource="EMBL-CDS" id="CAA97090"/>
    </conflict>
</comment>
<proteinExistence type="evidence at protein level"/>
<name>CATT_YEAST</name>
<reference key="1">
    <citation type="journal article" date="1986" name="Eur. J. Biochem.">
        <title>Nucleotide sequence of the Saccharomyces cerevisiae CTT1 gene and deduced amino-acid sequence of yeast catalase T.</title>
        <authorList>
            <person name="Hartig A."/>
            <person name="Ruis H."/>
        </authorList>
    </citation>
    <scope>NUCLEOTIDE SEQUENCE [GENOMIC DNA]</scope>
</reference>
<reference key="2">
    <citation type="journal article" date="1997" name="Nature">
        <title>The nucleotide sequence of Saccharomyces cerevisiae chromosome VII.</title>
        <authorList>
            <person name="Tettelin H."/>
            <person name="Agostoni-Carbone M.L."/>
            <person name="Albermann K."/>
            <person name="Albers M."/>
            <person name="Arroyo J."/>
            <person name="Backes U."/>
            <person name="Barreiros T."/>
            <person name="Bertani I."/>
            <person name="Bjourson A.J."/>
            <person name="Brueckner M."/>
            <person name="Bruschi C.V."/>
            <person name="Carignani G."/>
            <person name="Castagnoli L."/>
            <person name="Cerdan E."/>
            <person name="Clemente M.L."/>
            <person name="Coblenz A."/>
            <person name="Coglievina M."/>
            <person name="Coissac E."/>
            <person name="Defoor E."/>
            <person name="Del Bino S."/>
            <person name="Delius H."/>
            <person name="Delneri D."/>
            <person name="de Wergifosse P."/>
            <person name="Dujon B."/>
            <person name="Durand P."/>
            <person name="Entian K.-D."/>
            <person name="Eraso P."/>
            <person name="Escribano V."/>
            <person name="Fabiani L."/>
            <person name="Fartmann B."/>
            <person name="Feroli F."/>
            <person name="Feuermann M."/>
            <person name="Frontali L."/>
            <person name="Garcia-Gonzalez M."/>
            <person name="Garcia-Saez M.I."/>
            <person name="Goffeau A."/>
            <person name="Guerreiro P."/>
            <person name="Hani J."/>
            <person name="Hansen M."/>
            <person name="Hebling U."/>
            <person name="Hernandez K."/>
            <person name="Heumann K."/>
            <person name="Hilger F."/>
            <person name="Hofmann B."/>
            <person name="Indge K.J."/>
            <person name="James C.M."/>
            <person name="Klima R."/>
            <person name="Koetter P."/>
            <person name="Kramer B."/>
            <person name="Kramer W."/>
            <person name="Lauquin G."/>
            <person name="Leuther H."/>
            <person name="Louis E.J."/>
            <person name="Maillier E."/>
            <person name="Marconi A."/>
            <person name="Martegani E."/>
            <person name="Mazon M.J."/>
            <person name="Mazzoni C."/>
            <person name="McReynolds A.D.K."/>
            <person name="Melchioretto P."/>
            <person name="Mewes H.-W."/>
            <person name="Minenkova O."/>
            <person name="Mueller-Auer S."/>
            <person name="Nawrocki A."/>
            <person name="Netter P."/>
            <person name="Neu R."/>
            <person name="Nombela C."/>
            <person name="Oliver S.G."/>
            <person name="Panzeri L."/>
            <person name="Paoluzi S."/>
            <person name="Plevani P."/>
            <person name="Portetelle D."/>
            <person name="Portillo F."/>
            <person name="Potier S."/>
            <person name="Purnelle B."/>
            <person name="Rieger M."/>
            <person name="Riles L."/>
            <person name="Rinaldi T."/>
            <person name="Robben J."/>
            <person name="Rodrigues-Pousada C."/>
            <person name="Rodriguez-Belmonte E."/>
            <person name="Rodriguez-Torres A.M."/>
            <person name="Rose M."/>
            <person name="Ruzzi M."/>
            <person name="Saliola M."/>
            <person name="Sanchez-Perez M."/>
            <person name="Schaefer B."/>
            <person name="Schaefer M."/>
            <person name="Scharfe M."/>
            <person name="Schmidheini T."/>
            <person name="Schreer A."/>
            <person name="Skala J."/>
            <person name="Souciet J.-L."/>
            <person name="Steensma H.Y."/>
            <person name="Talla E."/>
            <person name="Thierry A."/>
            <person name="Vandenbol M."/>
            <person name="van der Aart Q.J.M."/>
            <person name="Van Dyck L."/>
            <person name="Vanoni M."/>
            <person name="Verhasselt P."/>
            <person name="Voet M."/>
            <person name="Volckaert G."/>
            <person name="Wambutt R."/>
            <person name="Watson M.D."/>
            <person name="Weber N."/>
            <person name="Wedler E."/>
            <person name="Wedler H."/>
            <person name="Wipfli P."/>
            <person name="Wolf K."/>
            <person name="Wright L.F."/>
            <person name="Zaccaria P."/>
            <person name="Zimmermann M."/>
            <person name="Zollner A."/>
            <person name="Kleine K."/>
        </authorList>
    </citation>
    <scope>NUCLEOTIDE SEQUENCE [LARGE SCALE GENOMIC DNA]</scope>
    <source>
        <strain>ATCC 204508 / S288c</strain>
    </source>
</reference>
<reference key="3">
    <citation type="journal article" date="2014" name="G3 (Bethesda)">
        <title>The reference genome sequence of Saccharomyces cerevisiae: Then and now.</title>
        <authorList>
            <person name="Engel S.R."/>
            <person name="Dietrich F.S."/>
            <person name="Fisk D.G."/>
            <person name="Binkley G."/>
            <person name="Balakrishnan R."/>
            <person name="Costanzo M.C."/>
            <person name="Dwight S.S."/>
            <person name="Hitz B.C."/>
            <person name="Karra K."/>
            <person name="Nash R.S."/>
            <person name="Weng S."/>
            <person name="Wong E.D."/>
            <person name="Lloyd P."/>
            <person name="Skrzypek M.S."/>
            <person name="Miyasato S.R."/>
            <person name="Simison M."/>
            <person name="Cherry J.M."/>
        </authorList>
    </citation>
    <scope>GENOME REANNOTATION</scope>
    <source>
        <strain>ATCC 204508 / S288c</strain>
    </source>
</reference>
<reference key="4">
    <citation type="journal article" date="1986" name="Mol. Gen. Genet.">
        <title>Heme control region of the catalase T gene of the yeast Saccharomyces cerevisiae.</title>
        <authorList>
            <person name="Spevak W."/>
            <person name="Hartig A."/>
            <person name="Meindl P."/>
            <person name="Ruis H."/>
        </authorList>
    </citation>
    <scope>NUCLEOTIDE SEQUENCE [GENOMIC DNA] OF 1-63</scope>
</reference>
<reference key="5">
    <citation type="journal article" date="1997" name="J. Biol. Chem.">
        <title>Metabolic and regulatory changes associated with growth of Saccharomyces cerevisiae in 1.4 M NaCl. Evidence for osmotic induction of glycerol dissimilation via the dihydroxyacetone pathway.</title>
        <authorList>
            <person name="Norbeck J."/>
            <person name="Blomberg A."/>
        </authorList>
    </citation>
    <scope>PROTEIN SEQUENCE OF 394-398</scope>
    <source>
        <strain>ATCC 44827 / SKQ2N</strain>
    </source>
</reference>
<reference key="6">
    <citation type="journal article" date="2003" name="Nature">
        <title>Global analysis of protein localization in budding yeast.</title>
        <authorList>
            <person name="Huh W.-K."/>
            <person name="Falvo J.V."/>
            <person name="Gerke L.C."/>
            <person name="Carroll A.S."/>
            <person name="Howson R.W."/>
            <person name="Weissman J.S."/>
            <person name="O'Shea E.K."/>
        </authorList>
    </citation>
    <scope>SUBCELLULAR LOCATION [LARGE SCALE ANALYSIS]</scope>
</reference>
<reference key="7">
    <citation type="journal article" date="2003" name="Nature">
        <title>Global analysis of protein expression in yeast.</title>
        <authorList>
            <person name="Ghaemmaghami S."/>
            <person name="Huh W.-K."/>
            <person name="Bower K."/>
            <person name="Howson R.W."/>
            <person name="Belle A."/>
            <person name="Dephoure N."/>
            <person name="O'Shea E.K."/>
            <person name="Weissman J.S."/>
        </authorList>
    </citation>
    <scope>LEVEL OF PROTEIN EXPRESSION [LARGE SCALE ANALYSIS]</scope>
</reference>
<reference key="8">
    <citation type="journal article" date="2005" name="Nucleic Acids Res.">
        <title>Mapping of transcription start sites in Saccharomyces cerevisiae using 5' SAGE.</title>
        <authorList>
            <person name="Zhang Z."/>
            <person name="Dietrich F.S."/>
        </authorList>
    </citation>
    <scope>IDENTIFICATION OF PROBABLE INITIATION SITE</scope>
</reference>
<gene>
    <name type="primary">CTT1</name>
    <name type="ordered locus">YGR088W</name>
</gene>
<dbReference type="EC" id="1.11.1.6"/>
<dbReference type="EMBL" id="X04625">
    <property type="protein sequence ID" value="CAA28298.1"/>
    <property type="molecule type" value="Genomic_DNA"/>
</dbReference>
<dbReference type="EMBL" id="Z72873">
    <property type="protein sequence ID" value="CAA97090.1"/>
    <property type="status" value="ALT_INIT"/>
    <property type="molecule type" value="Genomic_DNA"/>
</dbReference>
<dbReference type="EMBL" id="M30256">
    <property type="protein sequence ID" value="AAA34540.1"/>
    <property type="status" value="ALT_INIT"/>
    <property type="molecule type" value="Genomic_DNA"/>
</dbReference>
<dbReference type="EMBL" id="BK006941">
    <property type="protein sequence ID" value="DAA08181.1"/>
    <property type="molecule type" value="Genomic_DNA"/>
</dbReference>
<dbReference type="PIR" id="S64383">
    <property type="entry name" value="CSBYT"/>
</dbReference>
<dbReference type="RefSeq" id="NP_011602.2">
    <property type="nucleotide sequence ID" value="NM_001181217.1"/>
</dbReference>
<dbReference type="SMR" id="P06115"/>
<dbReference type="BioGRID" id="33330">
    <property type="interactions" value="75"/>
</dbReference>
<dbReference type="DIP" id="DIP-4310N"/>
<dbReference type="FunCoup" id="P06115">
    <property type="interactions" value="983"/>
</dbReference>
<dbReference type="IntAct" id="P06115">
    <property type="interactions" value="6"/>
</dbReference>
<dbReference type="STRING" id="4932.YGR088W"/>
<dbReference type="PeroxiBase" id="5176">
    <property type="entry name" value="SceKat02"/>
</dbReference>
<dbReference type="iPTMnet" id="P06115"/>
<dbReference type="PaxDb" id="4932-YGR088W"/>
<dbReference type="PeptideAtlas" id="P06115"/>
<dbReference type="EnsemblFungi" id="YGR088W_mRNA">
    <property type="protein sequence ID" value="YGR088W"/>
    <property type="gene ID" value="YGR088W"/>
</dbReference>
<dbReference type="GeneID" id="852979"/>
<dbReference type="KEGG" id="sce:YGR088W"/>
<dbReference type="AGR" id="SGD:S000003320"/>
<dbReference type="SGD" id="S000003320">
    <property type="gene designation" value="CTT1"/>
</dbReference>
<dbReference type="VEuPathDB" id="FungiDB:YGR088W"/>
<dbReference type="eggNOG" id="KOG0047">
    <property type="taxonomic scope" value="Eukaryota"/>
</dbReference>
<dbReference type="GeneTree" id="ENSGT00390000018100"/>
<dbReference type="HOGENOM" id="CLU_010645_2_0_1"/>
<dbReference type="InParanoid" id="P06115"/>
<dbReference type="OMA" id="FRYSVND"/>
<dbReference type="OrthoDB" id="6880011at2759"/>
<dbReference type="BioCyc" id="YEAST:YGR088W-MONOMER"/>
<dbReference type="BioGRID-ORCS" id="852979">
    <property type="hits" value="0 hits in 10 CRISPR screens"/>
</dbReference>
<dbReference type="PRO" id="PR:P06115"/>
<dbReference type="Proteomes" id="UP000002311">
    <property type="component" value="Chromosome VII"/>
</dbReference>
<dbReference type="RNAct" id="P06115">
    <property type="molecule type" value="protein"/>
</dbReference>
<dbReference type="GO" id="GO:0005737">
    <property type="term" value="C:cytoplasm"/>
    <property type="evidence" value="ECO:0007005"/>
    <property type="project" value="SGD"/>
</dbReference>
<dbReference type="GO" id="GO:0005739">
    <property type="term" value="C:mitochondrion"/>
    <property type="evidence" value="ECO:0000318"/>
    <property type="project" value="GO_Central"/>
</dbReference>
<dbReference type="GO" id="GO:0005777">
    <property type="term" value="C:peroxisome"/>
    <property type="evidence" value="ECO:0000318"/>
    <property type="project" value="GO_Central"/>
</dbReference>
<dbReference type="GO" id="GO:0004096">
    <property type="term" value="F:catalase activity"/>
    <property type="evidence" value="ECO:0000314"/>
    <property type="project" value="SGD"/>
</dbReference>
<dbReference type="GO" id="GO:0020037">
    <property type="term" value="F:heme binding"/>
    <property type="evidence" value="ECO:0000318"/>
    <property type="project" value="GO_Central"/>
</dbReference>
<dbReference type="GO" id="GO:0046872">
    <property type="term" value="F:metal ion binding"/>
    <property type="evidence" value="ECO:0007669"/>
    <property type="project" value="UniProtKB-KW"/>
</dbReference>
<dbReference type="GO" id="GO:0042744">
    <property type="term" value="P:hydrogen peroxide catabolic process"/>
    <property type="evidence" value="ECO:0000318"/>
    <property type="project" value="GO_Central"/>
</dbReference>
<dbReference type="GO" id="GO:0042542">
    <property type="term" value="P:response to hydrogen peroxide"/>
    <property type="evidence" value="ECO:0000318"/>
    <property type="project" value="GO_Central"/>
</dbReference>
<dbReference type="GO" id="GO:0000302">
    <property type="term" value="P:response to reactive oxygen species"/>
    <property type="evidence" value="ECO:0000315"/>
    <property type="project" value="SGD"/>
</dbReference>
<dbReference type="CDD" id="cd08157">
    <property type="entry name" value="catalase_fungal"/>
    <property type="match status" value="1"/>
</dbReference>
<dbReference type="FunFam" id="2.40.180.10:FF:000013">
    <property type="entry name" value="Catalase"/>
    <property type="match status" value="1"/>
</dbReference>
<dbReference type="Gene3D" id="2.40.180.10">
    <property type="entry name" value="Catalase core domain"/>
    <property type="match status" value="1"/>
</dbReference>
<dbReference type="InterPro" id="IPR018028">
    <property type="entry name" value="Catalase"/>
</dbReference>
<dbReference type="InterPro" id="IPR024708">
    <property type="entry name" value="Catalase_AS"/>
</dbReference>
<dbReference type="InterPro" id="IPR024711">
    <property type="entry name" value="Catalase_clade1/3"/>
</dbReference>
<dbReference type="InterPro" id="IPR011614">
    <property type="entry name" value="Catalase_core"/>
</dbReference>
<dbReference type="InterPro" id="IPR002226">
    <property type="entry name" value="Catalase_haem_BS"/>
</dbReference>
<dbReference type="InterPro" id="IPR010582">
    <property type="entry name" value="Catalase_immune_responsive"/>
</dbReference>
<dbReference type="InterPro" id="IPR020835">
    <property type="entry name" value="Catalase_sf"/>
</dbReference>
<dbReference type="PANTHER" id="PTHR11465">
    <property type="entry name" value="CATALASE"/>
    <property type="match status" value="1"/>
</dbReference>
<dbReference type="PANTHER" id="PTHR11465:SF62">
    <property type="entry name" value="CATALASE T"/>
    <property type="match status" value="1"/>
</dbReference>
<dbReference type="Pfam" id="PF00199">
    <property type="entry name" value="Catalase"/>
    <property type="match status" value="1"/>
</dbReference>
<dbReference type="Pfam" id="PF06628">
    <property type="entry name" value="Catalase-rel"/>
    <property type="match status" value="1"/>
</dbReference>
<dbReference type="PIRSF" id="PIRSF038928">
    <property type="entry name" value="Catalase_clade1-3"/>
    <property type="match status" value="1"/>
</dbReference>
<dbReference type="PRINTS" id="PR00067">
    <property type="entry name" value="CATALASE"/>
</dbReference>
<dbReference type="SMART" id="SM01060">
    <property type="entry name" value="Catalase"/>
    <property type="match status" value="1"/>
</dbReference>
<dbReference type="SUPFAM" id="SSF56634">
    <property type="entry name" value="Heme-dependent catalase-like"/>
    <property type="match status" value="1"/>
</dbReference>
<dbReference type="PROSITE" id="PS00437">
    <property type="entry name" value="CATALASE_1"/>
    <property type="match status" value="1"/>
</dbReference>
<dbReference type="PROSITE" id="PS00438">
    <property type="entry name" value="CATALASE_2"/>
    <property type="match status" value="1"/>
</dbReference>
<dbReference type="PROSITE" id="PS51402">
    <property type="entry name" value="CATALASE_3"/>
    <property type="match status" value="1"/>
</dbReference>